<feature type="chain" id="PRO_0000231179" description="UDP-N-acetylglucosamine 1-carboxyvinyltransferase">
    <location>
        <begin position="1"/>
        <end position="429"/>
    </location>
</feature>
<feature type="active site" description="Proton donor" evidence="1">
    <location>
        <position position="126"/>
    </location>
</feature>
<feature type="binding site" evidence="1">
    <location>
        <begin position="22"/>
        <end position="23"/>
    </location>
    <ligand>
        <name>phosphoenolpyruvate</name>
        <dbReference type="ChEBI" id="CHEBI:58702"/>
    </ligand>
</feature>
<feature type="binding site" evidence="1">
    <location>
        <position position="102"/>
    </location>
    <ligand>
        <name>UDP-N-acetyl-alpha-D-glucosamine</name>
        <dbReference type="ChEBI" id="CHEBI:57705"/>
    </ligand>
</feature>
<feature type="binding site" evidence="1">
    <location>
        <begin position="131"/>
        <end position="135"/>
    </location>
    <ligand>
        <name>UDP-N-acetyl-alpha-D-glucosamine</name>
        <dbReference type="ChEBI" id="CHEBI:57705"/>
    </ligand>
</feature>
<feature type="binding site" evidence="1">
    <location>
        <begin position="171"/>
        <end position="174"/>
    </location>
    <ligand>
        <name>UDP-N-acetyl-alpha-D-glucosamine</name>
        <dbReference type="ChEBI" id="CHEBI:57705"/>
    </ligand>
</feature>
<feature type="binding site" evidence="1">
    <location>
        <position position="316"/>
    </location>
    <ligand>
        <name>UDP-N-acetyl-alpha-D-glucosamine</name>
        <dbReference type="ChEBI" id="CHEBI:57705"/>
    </ligand>
</feature>
<feature type="binding site" evidence="1">
    <location>
        <position position="338"/>
    </location>
    <ligand>
        <name>UDP-N-acetyl-alpha-D-glucosamine</name>
        <dbReference type="ChEBI" id="CHEBI:57705"/>
    </ligand>
</feature>
<feature type="modified residue" description="2-(S-cysteinyl)pyruvic acid O-phosphothioketal" evidence="1">
    <location>
        <position position="126"/>
    </location>
</feature>
<protein>
    <recommendedName>
        <fullName evidence="1">UDP-N-acetylglucosamine 1-carboxyvinyltransferase</fullName>
        <ecNumber evidence="1">2.5.1.7</ecNumber>
    </recommendedName>
    <alternativeName>
        <fullName evidence="1">Enoylpyruvate transferase</fullName>
    </alternativeName>
    <alternativeName>
        <fullName evidence="1">UDP-N-acetylglucosamine enolpyruvyl transferase</fullName>
        <shortName evidence="1">EPT</shortName>
    </alternativeName>
</protein>
<organism>
    <name type="scientific">Brucella abortus biovar 1 (strain 9-941)</name>
    <dbReference type="NCBI Taxonomy" id="262698"/>
    <lineage>
        <taxon>Bacteria</taxon>
        <taxon>Pseudomonadati</taxon>
        <taxon>Pseudomonadota</taxon>
        <taxon>Alphaproteobacteria</taxon>
        <taxon>Hyphomicrobiales</taxon>
        <taxon>Brucellaceae</taxon>
        <taxon>Brucella/Ochrobactrum group</taxon>
        <taxon>Brucella</taxon>
    </lineage>
</organism>
<accession>Q57F97</accession>
<dbReference type="EC" id="2.5.1.7" evidence="1"/>
<dbReference type="EMBL" id="AE017223">
    <property type="protein sequence ID" value="AAX73687.1"/>
    <property type="molecule type" value="Genomic_DNA"/>
</dbReference>
<dbReference type="RefSeq" id="WP_002965536.1">
    <property type="nucleotide sequence ID" value="NC_006932.1"/>
</dbReference>
<dbReference type="SMR" id="Q57F97"/>
<dbReference type="EnsemblBacteria" id="AAX73687">
    <property type="protein sequence ID" value="AAX73687"/>
    <property type="gene ID" value="BruAb1_0282"/>
</dbReference>
<dbReference type="GeneID" id="97534345"/>
<dbReference type="KEGG" id="bmb:BruAb1_0282"/>
<dbReference type="HOGENOM" id="CLU_027387_0_0_5"/>
<dbReference type="UniPathway" id="UPA00219"/>
<dbReference type="Proteomes" id="UP000000540">
    <property type="component" value="Chromosome I"/>
</dbReference>
<dbReference type="GO" id="GO:0005737">
    <property type="term" value="C:cytoplasm"/>
    <property type="evidence" value="ECO:0007669"/>
    <property type="project" value="UniProtKB-SubCell"/>
</dbReference>
<dbReference type="GO" id="GO:0008760">
    <property type="term" value="F:UDP-N-acetylglucosamine 1-carboxyvinyltransferase activity"/>
    <property type="evidence" value="ECO:0007669"/>
    <property type="project" value="UniProtKB-UniRule"/>
</dbReference>
<dbReference type="GO" id="GO:0051301">
    <property type="term" value="P:cell division"/>
    <property type="evidence" value="ECO:0007669"/>
    <property type="project" value="UniProtKB-KW"/>
</dbReference>
<dbReference type="GO" id="GO:0071555">
    <property type="term" value="P:cell wall organization"/>
    <property type="evidence" value="ECO:0007669"/>
    <property type="project" value="UniProtKB-KW"/>
</dbReference>
<dbReference type="GO" id="GO:0009252">
    <property type="term" value="P:peptidoglycan biosynthetic process"/>
    <property type="evidence" value="ECO:0007669"/>
    <property type="project" value="UniProtKB-UniRule"/>
</dbReference>
<dbReference type="GO" id="GO:0008360">
    <property type="term" value="P:regulation of cell shape"/>
    <property type="evidence" value="ECO:0007669"/>
    <property type="project" value="UniProtKB-KW"/>
</dbReference>
<dbReference type="GO" id="GO:0019277">
    <property type="term" value="P:UDP-N-acetylgalactosamine biosynthetic process"/>
    <property type="evidence" value="ECO:0007669"/>
    <property type="project" value="InterPro"/>
</dbReference>
<dbReference type="CDD" id="cd01555">
    <property type="entry name" value="UdpNAET"/>
    <property type="match status" value="1"/>
</dbReference>
<dbReference type="FunFam" id="3.65.10.10:FF:000001">
    <property type="entry name" value="UDP-N-acetylglucosamine 1-carboxyvinyltransferase"/>
    <property type="match status" value="1"/>
</dbReference>
<dbReference type="Gene3D" id="3.65.10.10">
    <property type="entry name" value="Enolpyruvate transferase domain"/>
    <property type="match status" value="2"/>
</dbReference>
<dbReference type="HAMAP" id="MF_00111">
    <property type="entry name" value="MurA"/>
    <property type="match status" value="1"/>
</dbReference>
<dbReference type="InterPro" id="IPR001986">
    <property type="entry name" value="Enolpyruvate_Tfrase_dom"/>
</dbReference>
<dbReference type="InterPro" id="IPR036968">
    <property type="entry name" value="Enolpyruvate_Tfrase_sf"/>
</dbReference>
<dbReference type="InterPro" id="IPR050068">
    <property type="entry name" value="MurA_subfamily"/>
</dbReference>
<dbReference type="InterPro" id="IPR013792">
    <property type="entry name" value="RNA3'P_cycl/enolpyr_Trfase_a/b"/>
</dbReference>
<dbReference type="InterPro" id="IPR005750">
    <property type="entry name" value="UDP_GlcNAc_COvinyl_MurA"/>
</dbReference>
<dbReference type="NCBIfam" id="TIGR01072">
    <property type="entry name" value="murA"/>
    <property type="match status" value="1"/>
</dbReference>
<dbReference type="NCBIfam" id="NF006873">
    <property type="entry name" value="PRK09369.1"/>
    <property type="match status" value="1"/>
</dbReference>
<dbReference type="PANTHER" id="PTHR43783">
    <property type="entry name" value="UDP-N-ACETYLGLUCOSAMINE 1-CARBOXYVINYLTRANSFERASE"/>
    <property type="match status" value="1"/>
</dbReference>
<dbReference type="PANTHER" id="PTHR43783:SF1">
    <property type="entry name" value="UDP-N-ACETYLGLUCOSAMINE 1-CARBOXYVINYLTRANSFERASE"/>
    <property type="match status" value="1"/>
</dbReference>
<dbReference type="Pfam" id="PF00275">
    <property type="entry name" value="EPSP_synthase"/>
    <property type="match status" value="1"/>
</dbReference>
<dbReference type="SUPFAM" id="SSF55205">
    <property type="entry name" value="EPT/RTPC-like"/>
    <property type="match status" value="1"/>
</dbReference>
<evidence type="ECO:0000255" key="1">
    <source>
        <dbReference type="HAMAP-Rule" id="MF_00111"/>
    </source>
</evidence>
<gene>
    <name evidence="1" type="primary">murA</name>
    <name type="ordered locus">BruAb1_0282</name>
</gene>
<reference key="1">
    <citation type="journal article" date="2005" name="J. Bacteriol.">
        <title>Completion of the genome sequence of Brucella abortus and comparison to the highly similar genomes of Brucella melitensis and Brucella suis.</title>
        <authorList>
            <person name="Halling S.M."/>
            <person name="Peterson-Burch B.D."/>
            <person name="Bricker B.J."/>
            <person name="Zuerner R.L."/>
            <person name="Qing Z."/>
            <person name="Li L.-L."/>
            <person name="Kapur V."/>
            <person name="Alt D.P."/>
            <person name="Olsen S.C."/>
        </authorList>
    </citation>
    <scope>NUCLEOTIDE SEQUENCE [LARGE SCALE GENOMIC DNA]</scope>
    <source>
        <strain>9-941</strain>
    </source>
</reference>
<proteinExistence type="inferred from homology"/>
<keyword id="KW-0131">Cell cycle</keyword>
<keyword id="KW-0132">Cell division</keyword>
<keyword id="KW-0133">Cell shape</keyword>
<keyword id="KW-0961">Cell wall biogenesis/degradation</keyword>
<keyword id="KW-0963">Cytoplasm</keyword>
<keyword id="KW-0573">Peptidoglycan synthesis</keyword>
<keyword id="KW-0670">Pyruvate</keyword>
<keyword id="KW-0808">Transferase</keyword>
<comment type="function">
    <text evidence="1">Cell wall formation. Adds enolpyruvyl to UDP-N-acetylglucosamine.</text>
</comment>
<comment type="catalytic activity">
    <reaction evidence="1">
        <text>phosphoenolpyruvate + UDP-N-acetyl-alpha-D-glucosamine = UDP-N-acetyl-3-O-(1-carboxyvinyl)-alpha-D-glucosamine + phosphate</text>
        <dbReference type="Rhea" id="RHEA:18681"/>
        <dbReference type="ChEBI" id="CHEBI:43474"/>
        <dbReference type="ChEBI" id="CHEBI:57705"/>
        <dbReference type="ChEBI" id="CHEBI:58702"/>
        <dbReference type="ChEBI" id="CHEBI:68483"/>
        <dbReference type="EC" id="2.5.1.7"/>
    </reaction>
</comment>
<comment type="pathway">
    <text evidence="1">Cell wall biogenesis; peptidoglycan biosynthesis.</text>
</comment>
<comment type="subcellular location">
    <subcellularLocation>
        <location evidence="1">Cytoplasm</location>
    </subcellularLocation>
</comment>
<comment type="similarity">
    <text evidence="1">Belongs to the EPSP synthase family. MurA subfamily.</text>
</comment>
<name>MURA_BRUAB</name>
<sequence length="429" mass="45719">MDRIKIVGGNKLNGVIPISGAKNAALPLMIASLLTDDTLTLENVPHLADVEQLIRILSNHGVDYSVNGRREHQNGPYSRTIHFTARNIVDTTAPYELVSRMRASFWVIGPLLARMGEANVSLPGGCAIGTRPVDLLLDALLALGAEIDIENGYAKAKARNGLVGARYKFPKVSVGATHVMLMAATLAKGETIIENAAREPEVANLADCLNAMGAKISGAGSSTIHVQGVTNLSGARVRIIPDRIEAGTYAMAVAMTGGDVLLEGAQESQLSCVLETLRQAGAEINETNSGLRVVRNGHGIQPVDITTDPFPGFPTDLQAQFMGLMTRAKGTSHITETIFENRFMHVQELARLGAKISLSGQTATVEGVERLKGAQVMATDLRASVSLVIAGLAAEGETIVNRVYHLDRGFERLEEKLSRCGADVKRISG</sequence>